<reference key="1">
    <citation type="journal article" date="2005" name="Proc. Natl. Acad. Sci. U.S.A.">
        <title>Complete genome sequence of Vibrio fischeri: a symbiotic bacterium with pathogenic congeners.</title>
        <authorList>
            <person name="Ruby E.G."/>
            <person name="Urbanowski M."/>
            <person name="Campbell J."/>
            <person name="Dunn A."/>
            <person name="Faini M."/>
            <person name="Gunsalus R."/>
            <person name="Lostroh P."/>
            <person name="Lupp C."/>
            <person name="McCann J."/>
            <person name="Millikan D."/>
            <person name="Schaefer A."/>
            <person name="Stabb E."/>
            <person name="Stevens A."/>
            <person name="Visick K."/>
            <person name="Whistler C."/>
            <person name="Greenberg E.P."/>
        </authorList>
    </citation>
    <scope>NUCLEOTIDE SEQUENCE [LARGE SCALE GENOMIC DNA]</scope>
    <source>
        <strain>ATCC 700601 / ES114</strain>
    </source>
</reference>
<gene>
    <name type="ordered locus">VF_0869</name>
</gene>
<sequence length="85" mass="9625">MNISKQEQRVLHTLAMGGEIRRYLNEDGKLTEITCFTREGYGLSNCTMDTFKKLKNKKLISSKGGRPYRITPLGATSAQAQMNQR</sequence>
<dbReference type="EMBL" id="CP000020">
    <property type="protein sequence ID" value="AAW85364.1"/>
    <property type="status" value="ALT_INIT"/>
    <property type="molecule type" value="Genomic_DNA"/>
</dbReference>
<dbReference type="RefSeq" id="WP_047863581.1">
    <property type="nucleotide sequence ID" value="NC_006840.2"/>
</dbReference>
<dbReference type="RefSeq" id="YP_204252.1">
    <property type="nucleotide sequence ID" value="NC_006840.2"/>
</dbReference>
<dbReference type="SMR" id="Q5E6I2"/>
<dbReference type="STRING" id="312309.VF_0869"/>
<dbReference type="EnsemblBacteria" id="AAW85364">
    <property type="protein sequence ID" value="AAW85364"/>
    <property type="gene ID" value="VF_0869"/>
</dbReference>
<dbReference type="GeneID" id="54163537"/>
<dbReference type="KEGG" id="vfi:VF_0869"/>
<dbReference type="PATRIC" id="fig|312309.11.peg.864"/>
<dbReference type="eggNOG" id="COG3811">
    <property type="taxonomic scope" value="Bacteria"/>
</dbReference>
<dbReference type="HOGENOM" id="CLU_164736_0_0_6"/>
<dbReference type="OrthoDB" id="7204880at2"/>
<dbReference type="Proteomes" id="UP000000537">
    <property type="component" value="Chromosome I"/>
</dbReference>
<dbReference type="HAMAP" id="MF_00827">
    <property type="entry name" value="UPF0386"/>
    <property type="match status" value="1"/>
</dbReference>
<dbReference type="InterPro" id="IPR018654">
    <property type="entry name" value="YjhX_toxin"/>
</dbReference>
<dbReference type="NCBIfam" id="NF010240">
    <property type="entry name" value="PRK13687.1"/>
    <property type="match status" value="1"/>
</dbReference>
<dbReference type="Pfam" id="PF09857">
    <property type="entry name" value="YjhX_toxin"/>
    <property type="match status" value="1"/>
</dbReference>
<protein>
    <recommendedName>
        <fullName evidence="1">UPF0386 protein VF_0869</fullName>
    </recommendedName>
</protein>
<comment type="similarity">
    <text evidence="1">Belongs to the UPF0386 family.</text>
</comment>
<comment type="sequence caution" evidence="2">
    <conflict type="erroneous initiation">
        <sequence resource="EMBL-CDS" id="AAW85364"/>
    </conflict>
</comment>
<feature type="chain" id="PRO_0000252192" description="UPF0386 protein VF_0869">
    <location>
        <begin position="1"/>
        <end position="85"/>
    </location>
</feature>
<name>Y869_ALIF1</name>
<proteinExistence type="inferred from homology"/>
<evidence type="ECO:0000255" key="1">
    <source>
        <dbReference type="HAMAP-Rule" id="MF_00827"/>
    </source>
</evidence>
<evidence type="ECO:0000305" key="2"/>
<organism>
    <name type="scientific">Aliivibrio fischeri (strain ATCC 700601 / ES114)</name>
    <name type="common">Vibrio fischeri</name>
    <dbReference type="NCBI Taxonomy" id="312309"/>
    <lineage>
        <taxon>Bacteria</taxon>
        <taxon>Pseudomonadati</taxon>
        <taxon>Pseudomonadota</taxon>
        <taxon>Gammaproteobacteria</taxon>
        <taxon>Vibrionales</taxon>
        <taxon>Vibrionaceae</taxon>
        <taxon>Aliivibrio</taxon>
    </lineage>
</organism>
<keyword id="KW-1185">Reference proteome</keyword>
<accession>Q5E6I2</accession>